<feature type="chain" id="PRO_0000305077" description="Phospholysine phosphohistidine inorganic pyrophosphate phosphatase">
    <location>
        <begin position="1"/>
        <end position="270"/>
    </location>
</feature>
<feature type="binding site" evidence="1">
    <location>
        <begin position="19"/>
        <end position="21"/>
    </location>
    <ligand>
        <name>substrate</name>
    </ligand>
</feature>
<feature type="binding site" evidence="1">
    <location>
        <position position="19"/>
    </location>
    <ligand>
        <name>Mg(2+)</name>
        <dbReference type="ChEBI" id="CHEBI:18420"/>
    </ligand>
</feature>
<feature type="binding site" evidence="1">
    <location>
        <position position="21"/>
    </location>
    <ligand>
        <name>Mg(2+)</name>
        <dbReference type="ChEBI" id="CHEBI:18420"/>
    </ligand>
</feature>
<feature type="binding site" evidence="1">
    <location>
        <begin position="56"/>
        <end position="57"/>
    </location>
    <ligand>
        <name>substrate</name>
    </ligand>
</feature>
<feature type="binding site" evidence="1">
    <location>
        <position position="191"/>
    </location>
    <ligand>
        <name>substrate</name>
    </ligand>
</feature>
<feature type="binding site" evidence="1">
    <location>
        <position position="216"/>
    </location>
    <ligand>
        <name>Mg(2+)</name>
        <dbReference type="ChEBI" id="CHEBI:18420"/>
    </ligand>
</feature>
<organism>
    <name type="scientific">Danio rerio</name>
    <name type="common">Zebrafish</name>
    <name type="synonym">Brachydanio rerio</name>
    <dbReference type="NCBI Taxonomy" id="7955"/>
    <lineage>
        <taxon>Eukaryota</taxon>
        <taxon>Metazoa</taxon>
        <taxon>Chordata</taxon>
        <taxon>Craniata</taxon>
        <taxon>Vertebrata</taxon>
        <taxon>Euteleostomi</taxon>
        <taxon>Actinopterygii</taxon>
        <taxon>Neopterygii</taxon>
        <taxon>Teleostei</taxon>
        <taxon>Ostariophysi</taxon>
        <taxon>Cypriniformes</taxon>
        <taxon>Danionidae</taxon>
        <taxon>Danioninae</taxon>
        <taxon>Danio</taxon>
    </lineage>
</organism>
<keyword id="KW-0963">Cytoplasm</keyword>
<keyword id="KW-0378">Hydrolase</keyword>
<keyword id="KW-0460">Magnesium</keyword>
<keyword id="KW-0479">Metal-binding</keyword>
<keyword id="KW-0539">Nucleus</keyword>
<keyword id="KW-1185">Reference proteome</keyword>
<reference key="1">
    <citation type="submission" date="2007-06" db="EMBL/GenBank/DDBJ databases">
        <authorList>
            <consortium name="NIH - Zebrafish Gene Collection (ZGC) project"/>
        </authorList>
    </citation>
    <scope>NUCLEOTIDE SEQUENCE [LARGE SCALE MRNA]</scope>
    <source>
        <tissue>Embryo</tissue>
    </source>
</reference>
<dbReference type="EC" id="3.1.3.-"/>
<dbReference type="EC" id="3.6.1.1"/>
<dbReference type="EMBL" id="BC142939">
    <property type="protein sequence ID" value="AAI42940.1"/>
    <property type="molecule type" value="mRNA"/>
</dbReference>
<dbReference type="RefSeq" id="NP_001092251.1">
    <property type="nucleotide sequence ID" value="NM_001098781.1"/>
</dbReference>
<dbReference type="SMR" id="A5PLK2"/>
<dbReference type="FunCoup" id="A5PLK2">
    <property type="interactions" value="340"/>
</dbReference>
<dbReference type="STRING" id="7955.ENSDARP00000078992"/>
<dbReference type="PaxDb" id="7955-ENSDARP00000078992"/>
<dbReference type="PeptideAtlas" id="A5PLK2"/>
<dbReference type="Ensembl" id="ENSDART00000084557">
    <property type="protein sequence ID" value="ENSDARP00000078992"/>
    <property type="gene ID" value="ENSDARG00000060196"/>
</dbReference>
<dbReference type="GeneID" id="100073345"/>
<dbReference type="KEGG" id="dre:100073345"/>
<dbReference type="AGR" id="ZFIN:ZDB-GENE-070615-43"/>
<dbReference type="CTD" id="64077"/>
<dbReference type="ZFIN" id="ZDB-GENE-070615-43">
    <property type="gene designation" value="lhpp"/>
</dbReference>
<dbReference type="eggNOG" id="KOG3040">
    <property type="taxonomic scope" value="Eukaryota"/>
</dbReference>
<dbReference type="HOGENOM" id="CLU_043473_4_1_1"/>
<dbReference type="InParanoid" id="A5PLK2"/>
<dbReference type="OMA" id="EEHIFMP"/>
<dbReference type="OrthoDB" id="426235at2759"/>
<dbReference type="PhylomeDB" id="A5PLK2"/>
<dbReference type="TreeFam" id="TF314344"/>
<dbReference type="Reactome" id="R-DRE-71737">
    <property type="pathway name" value="Pyrophosphate hydrolysis"/>
</dbReference>
<dbReference type="PRO" id="PR:A5PLK2"/>
<dbReference type="Proteomes" id="UP000000437">
    <property type="component" value="Chromosome 12"/>
</dbReference>
<dbReference type="Bgee" id="ENSDARG00000060196">
    <property type="expression patterns" value="Expressed in muscle tissue and 22 other cell types or tissues"/>
</dbReference>
<dbReference type="GO" id="GO:0005737">
    <property type="term" value="C:cytoplasm"/>
    <property type="evidence" value="ECO:0000318"/>
    <property type="project" value="GO_Central"/>
</dbReference>
<dbReference type="GO" id="GO:0005829">
    <property type="term" value="C:cytosol"/>
    <property type="evidence" value="ECO:0000250"/>
    <property type="project" value="UniProtKB"/>
</dbReference>
<dbReference type="GO" id="GO:0005634">
    <property type="term" value="C:nucleus"/>
    <property type="evidence" value="ECO:0000250"/>
    <property type="project" value="UniProtKB"/>
</dbReference>
<dbReference type="GO" id="GO:0004427">
    <property type="term" value="F:inorganic diphosphate phosphatase activity"/>
    <property type="evidence" value="ECO:0000250"/>
    <property type="project" value="UniProtKB"/>
</dbReference>
<dbReference type="GO" id="GO:0046872">
    <property type="term" value="F:metal ion binding"/>
    <property type="evidence" value="ECO:0007669"/>
    <property type="project" value="UniProtKB-KW"/>
</dbReference>
<dbReference type="GO" id="GO:0016791">
    <property type="term" value="F:phosphatase activity"/>
    <property type="evidence" value="ECO:0000318"/>
    <property type="project" value="GO_Central"/>
</dbReference>
<dbReference type="GO" id="GO:0006796">
    <property type="term" value="P:phosphate-containing compound metabolic process"/>
    <property type="evidence" value="ECO:0000250"/>
    <property type="project" value="UniProtKB"/>
</dbReference>
<dbReference type="CDD" id="cd07509">
    <property type="entry name" value="HAD_PPase"/>
    <property type="match status" value="1"/>
</dbReference>
<dbReference type="FunFam" id="3.40.50.1000:FF:000051">
    <property type="entry name" value="Phospholysine phosphohistidine inorganic pyrophosphate phosphatase"/>
    <property type="match status" value="1"/>
</dbReference>
<dbReference type="Gene3D" id="3.40.50.1000">
    <property type="entry name" value="HAD superfamily/HAD-like"/>
    <property type="match status" value="2"/>
</dbReference>
<dbReference type="InterPro" id="IPR036412">
    <property type="entry name" value="HAD-like_sf"/>
</dbReference>
<dbReference type="InterPro" id="IPR006439">
    <property type="entry name" value="HAD-SF_hydro_IA"/>
</dbReference>
<dbReference type="InterPro" id="IPR006357">
    <property type="entry name" value="HAD-SF_hydro_IIA"/>
</dbReference>
<dbReference type="InterPro" id="IPR023214">
    <property type="entry name" value="HAD_sf"/>
</dbReference>
<dbReference type="InterPro" id="IPR006355">
    <property type="entry name" value="LHPP/HDHD2"/>
</dbReference>
<dbReference type="NCBIfam" id="TIGR01549">
    <property type="entry name" value="HAD-SF-IA-v1"/>
    <property type="match status" value="1"/>
</dbReference>
<dbReference type="NCBIfam" id="TIGR01458">
    <property type="entry name" value="HAD-SF-IIA-hyp3"/>
    <property type="match status" value="1"/>
</dbReference>
<dbReference type="PANTHER" id="PTHR19288">
    <property type="entry name" value="4-NITROPHENYLPHOSPHATASE-RELATED"/>
    <property type="match status" value="1"/>
</dbReference>
<dbReference type="PANTHER" id="PTHR19288:SF44">
    <property type="entry name" value="PHOSPHOLYSINE PHOSPHOHISTIDINE INORGANIC PYROPHOSPHATE PHOSPHATASE"/>
    <property type="match status" value="1"/>
</dbReference>
<dbReference type="Pfam" id="PF13344">
    <property type="entry name" value="Hydrolase_6"/>
    <property type="match status" value="1"/>
</dbReference>
<dbReference type="Pfam" id="PF13242">
    <property type="entry name" value="Hydrolase_like"/>
    <property type="match status" value="1"/>
</dbReference>
<dbReference type="SUPFAM" id="SSF56784">
    <property type="entry name" value="HAD-like"/>
    <property type="match status" value="1"/>
</dbReference>
<gene>
    <name type="primary">lhpp</name>
    <name type="ORF">zgc:165670</name>
</gene>
<accession>A5PLK2</accession>
<name>LHPP_DANRE</name>
<protein>
    <recommendedName>
        <fullName>Phospholysine phosphohistidine inorganic pyrophosphate phosphatase</fullName>
        <ecNumber>3.1.3.-</ecNumber>
        <ecNumber>3.6.1.1</ecNumber>
    </recommendedName>
</protein>
<evidence type="ECO:0000250" key="1"/>
<evidence type="ECO:0000305" key="2"/>
<comment type="function">
    <text evidence="1">Phosphatase that hydrolyzes imidodiphosphate, 3-phosphohistidine and 6-phospholysine. Has broad substrate specificity and can also hydrolyze inorganic diphosphate, but with lower efficiency (By similarity).</text>
</comment>
<comment type="catalytic activity">
    <reaction>
        <text>diphosphate + H2O = 2 phosphate + H(+)</text>
        <dbReference type="Rhea" id="RHEA:24576"/>
        <dbReference type="ChEBI" id="CHEBI:15377"/>
        <dbReference type="ChEBI" id="CHEBI:15378"/>
        <dbReference type="ChEBI" id="CHEBI:33019"/>
        <dbReference type="ChEBI" id="CHEBI:43474"/>
        <dbReference type="EC" id="3.6.1.1"/>
    </reaction>
</comment>
<comment type="cofactor">
    <cofactor evidence="1">
        <name>Mg(2+)</name>
        <dbReference type="ChEBI" id="CHEBI:18420"/>
    </cofactor>
    <text evidence="1">Binds 1 Mg(2+) ion per subunit.</text>
</comment>
<comment type="subcellular location">
    <subcellularLocation>
        <location evidence="1">Cytoplasm</location>
    </subcellularLocation>
    <subcellularLocation>
        <location evidence="1">Nucleus</location>
    </subcellularLocation>
</comment>
<comment type="similarity">
    <text evidence="2">Belongs to the HAD-like hydrolase superfamily.</text>
</comment>
<proteinExistence type="evidence at transcript level"/>
<sequence>MAADSSLEFLKSVKGVILDMCGVLYDSGEGGGRAIHGSVEAVKRLMDSGLMLRFCTNETQNTRERFVQKLRVMGFDISVSHVFSPAPAVVQILQKRHLRPHLLVHDDLIPEFDGVDTSSPNCVVIGDAAEKFSYQNLNEAFRVLIGLEKPVLFSLGRGRYYKETDGLKLDVGVYMKALEYACDVQAEVVGKPSSEFFKTVLNDMNLQPHEVVMVGDDLVNDVGGAQSCGMKGLQVRTGKYRPSDECDPSVRADAYVDDLSAAVDAILTNR</sequence>